<comment type="subcellular location">
    <subcellularLocation>
        <location evidence="1">Cell inner membrane</location>
        <topology evidence="1">Multi-pass membrane protein</topology>
    </subcellularLocation>
</comment>
<comment type="similarity">
    <text evidence="1">Belongs to the major facilitator superfamily. TsgA family.</text>
</comment>
<gene>
    <name evidence="1" type="primary">tsgA</name>
    <name type="ordered locus">E2348C_3614</name>
</gene>
<keyword id="KW-0997">Cell inner membrane</keyword>
<keyword id="KW-1003">Cell membrane</keyword>
<keyword id="KW-0472">Membrane</keyword>
<keyword id="KW-1185">Reference proteome</keyword>
<keyword id="KW-0812">Transmembrane</keyword>
<keyword id="KW-1133">Transmembrane helix</keyword>
<evidence type="ECO:0000255" key="1">
    <source>
        <dbReference type="HAMAP-Rule" id="MF_01044"/>
    </source>
</evidence>
<accession>B7UK75</accession>
<dbReference type="EMBL" id="FM180568">
    <property type="protein sequence ID" value="CAS11162.1"/>
    <property type="molecule type" value="Genomic_DNA"/>
</dbReference>
<dbReference type="RefSeq" id="WP_000185247.1">
    <property type="nucleotide sequence ID" value="NC_011601.1"/>
</dbReference>
<dbReference type="SMR" id="B7UK75"/>
<dbReference type="GeneID" id="75206308"/>
<dbReference type="KEGG" id="ecg:E2348C_3614"/>
<dbReference type="HOGENOM" id="CLU_056916_0_0_6"/>
<dbReference type="Proteomes" id="UP000008205">
    <property type="component" value="Chromosome"/>
</dbReference>
<dbReference type="GO" id="GO:0005886">
    <property type="term" value="C:plasma membrane"/>
    <property type="evidence" value="ECO:0007669"/>
    <property type="project" value="UniProtKB-SubCell"/>
</dbReference>
<dbReference type="GO" id="GO:0022857">
    <property type="term" value="F:transmembrane transporter activity"/>
    <property type="evidence" value="ECO:0007669"/>
    <property type="project" value="InterPro"/>
</dbReference>
<dbReference type="CDD" id="cd17333">
    <property type="entry name" value="MFS_FucP_MFSD4_like"/>
    <property type="match status" value="1"/>
</dbReference>
<dbReference type="FunFam" id="1.20.1250.20:FF:000032">
    <property type="entry name" value="Protein TsgA"/>
    <property type="match status" value="1"/>
</dbReference>
<dbReference type="FunFam" id="1.20.1250.20:FF:000052">
    <property type="entry name" value="Protein TsgA"/>
    <property type="match status" value="1"/>
</dbReference>
<dbReference type="Gene3D" id="1.20.1250.20">
    <property type="entry name" value="MFS general substrate transporter like domains"/>
    <property type="match status" value="2"/>
</dbReference>
<dbReference type="HAMAP" id="MF_01044">
    <property type="entry name" value="MFS_TsgA"/>
    <property type="match status" value="1"/>
</dbReference>
<dbReference type="InterPro" id="IPR011701">
    <property type="entry name" value="MFS"/>
</dbReference>
<dbReference type="InterPro" id="IPR020846">
    <property type="entry name" value="MFS_dom"/>
</dbReference>
<dbReference type="InterPro" id="IPR036259">
    <property type="entry name" value="MFS_trans_sf"/>
</dbReference>
<dbReference type="InterPro" id="IPR023528">
    <property type="entry name" value="MFS_TsgA"/>
</dbReference>
<dbReference type="InterPro" id="IPR050375">
    <property type="entry name" value="MFS_TsgA-like"/>
</dbReference>
<dbReference type="NCBIfam" id="NF002982">
    <property type="entry name" value="PRK03699.1"/>
    <property type="match status" value="1"/>
</dbReference>
<dbReference type="PANTHER" id="PTHR43702">
    <property type="entry name" value="L-FUCOSE-PROTON SYMPORTER"/>
    <property type="match status" value="1"/>
</dbReference>
<dbReference type="PANTHER" id="PTHR43702:SF3">
    <property type="entry name" value="PROTEIN TSGA"/>
    <property type="match status" value="1"/>
</dbReference>
<dbReference type="Pfam" id="PF07690">
    <property type="entry name" value="MFS_1"/>
    <property type="match status" value="1"/>
</dbReference>
<dbReference type="SUPFAM" id="SSF103473">
    <property type="entry name" value="MFS general substrate transporter"/>
    <property type="match status" value="1"/>
</dbReference>
<dbReference type="PROSITE" id="PS50850">
    <property type="entry name" value="MFS"/>
    <property type="match status" value="1"/>
</dbReference>
<feature type="chain" id="PRO_1000149595" description="Protein TsgA">
    <location>
        <begin position="1"/>
        <end position="393"/>
    </location>
</feature>
<feature type="transmembrane region" description="Helical" evidence="1">
    <location>
        <begin position="11"/>
        <end position="31"/>
    </location>
</feature>
<feature type="transmembrane region" description="Helical" evidence="1">
    <location>
        <begin position="51"/>
        <end position="71"/>
    </location>
</feature>
<feature type="transmembrane region" description="Helical" evidence="1">
    <location>
        <begin position="78"/>
        <end position="98"/>
    </location>
</feature>
<feature type="transmembrane region" description="Helical" evidence="1">
    <location>
        <begin position="101"/>
        <end position="121"/>
    </location>
</feature>
<feature type="transmembrane region" description="Helical" evidence="1">
    <location>
        <begin position="134"/>
        <end position="154"/>
    </location>
</feature>
<feature type="transmembrane region" description="Helical" evidence="1">
    <location>
        <begin position="162"/>
        <end position="182"/>
    </location>
</feature>
<feature type="transmembrane region" description="Helical" evidence="1">
    <location>
        <begin position="206"/>
        <end position="226"/>
    </location>
</feature>
<feature type="transmembrane region" description="Helical" evidence="1">
    <location>
        <begin position="245"/>
        <end position="265"/>
    </location>
</feature>
<feature type="transmembrane region" description="Helical" evidence="1">
    <location>
        <begin position="273"/>
        <end position="293"/>
    </location>
</feature>
<feature type="transmembrane region" description="Helical" evidence="1">
    <location>
        <begin position="297"/>
        <end position="317"/>
    </location>
</feature>
<feature type="transmembrane region" description="Helical" evidence="1">
    <location>
        <begin position="332"/>
        <end position="352"/>
    </location>
</feature>
<feature type="transmembrane region" description="Helical" evidence="1">
    <location>
        <begin position="361"/>
        <end position="381"/>
    </location>
</feature>
<organism>
    <name type="scientific">Escherichia coli O127:H6 (strain E2348/69 / EPEC)</name>
    <dbReference type="NCBI Taxonomy" id="574521"/>
    <lineage>
        <taxon>Bacteria</taxon>
        <taxon>Pseudomonadati</taxon>
        <taxon>Pseudomonadota</taxon>
        <taxon>Gammaproteobacteria</taxon>
        <taxon>Enterobacterales</taxon>
        <taxon>Enterobacteriaceae</taxon>
        <taxon>Escherichia</taxon>
    </lineage>
</organism>
<proteinExistence type="inferred from homology"/>
<sequence length="393" mass="43166">MTNSNRIKLTWISFLSYALTGALVIVTGMVMGNIADYFNLPVSSMSNTFTFLNAGILISIFLNAWLMEIVPLKTQLRFGFLLMVLAVAGLMFSHSLALFSAAMFILGVVSGITMSIGTFLVTQMYEGRQRGSRLLFTDSFFSMAGMIFPMIAAFLLARSIEWYWVYACIGLVYVAIFILTFGCEFPALGKHAPKTDAPVEKEKWGIGVLFLSVAALCYILGQLGFISWVPEYAKGLGMSLNDAGTLVSNFWMSYMVGMWAFSFILRFFDLQRILTVLAGLAAILMYVFNTGTPAHMAWSILALGFFSSAIYTTIITLGSQQTKVPSPKLVNFVLTCGTIGTMLTFVVTGPIVEHSGPQAALLTANGLYAVVFVMCFLLGFVSRHRQHNTLTSH</sequence>
<name>TSGA_ECO27</name>
<reference key="1">
    <citation type="journal article" date="2009" name="J. Bacteriol.">
        <title>Complete genome sequence and comparative genome analysis of enteropathogenic Escherichia coli O127:H6 strain E2348/69.</title>
        <authorList>
            <person name="Iguchi A."/>
            <person name="Thomson N.R."/>
            <person name="Ogura Y."/>
            <person name="Saunders D."/>
            <person name="Ooka T."/>
            <person name="Henderson I.R."/>
            <person name="Harris D."/>
            <person name="Asadulghani M."/>
            <person name="Kurokawa K."/>
            <person name="Dean P."/>
            <person name="Kenny B."/>
            <person name="Quail M.A."/>
            <person name="Thurston S."/>
            <person name="Dougan G."/>
            <person name="Hayashi T."/>
            <person name="Parkhill J."/>
            <person name="Frankel G."/>
        </authorList>
    </citation>
    <scope>NUCLEOTIDE SEQUENCE [LARGE SCALE GENOMIC DNA]</scope>
    <source>
        <strain>E2348/69 / EPEC</strain>
    </source>
</reference>
<protein>
    <recommendedName>
        <fullName evidence="1">Protein TsgA</fullName>
    </recommendedName>
</protein>